<keyword id="KW-0963">Cytoplasm</keyword>
<keyword id="KW-0489">Methyltransferase</keyword>
<keyword id="KW-0698">rRNA processing</keyword>
<keyword id="KW-0949">S-adenosyl-L-methionine</keyword>
<keyword id="KW-0808">Transferase</keyword>
<accession>C5WIJ4</accession>
<sequence length="316" mass="35652">MTKEFHHVTVLLHETVDMLDIKPNGIYVDATLGGSGHSAYLLSKLSEQGHLYCFDQDQKAIDNAQVTLKSYIDKGQVTFIKDNFRHLKARLTALGVDEIDGILYDLGVSSPQLDERERGFSYNQDAPLDMRMDRQAPLTAYDVVNTYPFNDLVKIFFKYGEDKFSKQIARKIEQARAIKPIETTTELAELIKAAKPAKELKKKGHPAKQIFQAIRIEVNDELGAADESIQDAMELLALDGRISVITFHSLEDRLTKQLFKEASTVDVPKGLPFIPEDMKPTFELVSRKPILPSQEELAANNRAHSAKLRVAKKIRK</sequence>
<organism>
    <name type="scientific">Streptococcus dysgalactiae subsp. equisimilis (strain GGS_124)</name>
    <dbReference type="NCBI Taxonomy" id="486410"/>
    <lineage>
        <taxon>Bacteria</taxon>
        <taxon>Bacillati</taxon>
        <taxon>Bacillota</taxon>
        <taxon>Bacilli</taxon>
        <taxon>Lactobacillales</taxon>
        <taxon>Streptococcaceae</taxon>
        <taxon>Streptococcus</taxon>
    </lineage>
</organism>
<proteinExistence type="inferred from homology"/>
<gene>
    <name evidence="1" type="primary">rsmH</name>
    <name type="synonym">mraW</name>
    <name type="ordered locus">SDEG_1726</name>
</gene>
<feature type="chain" id="PRO_0000387144" description="Ribosomal RNA small subunit methyltransferase H">
    <location>
        <begin position="1"/>
        <end position="316"/>
    </location>
</feature>
<feature type="binding site" evidence="1">
    <location>
        <begin position="35"/>
        <end position="37"/>
    </location>
    <ligand>
        <name>S-adenosyl-L-methionine</name>
        <dbReference type="ChEBI" id="CHEBI:59789"/>
    </ligand>
</feature>
<feature type="binding site" evidence="1">
    <location>
        <position position="55"/>
    </location>
    <ligand>
        <name>S-adenosyl-L-methionine</name>
        <dbReference type="ChEBI" id="CHEBI:59789"/>
    </ligand>
</feature>
<feature type="binding site" evidence="1">
    <location>
        <position position="84"/>
    </location>
    <ligand>
        <name>S-adenosyl-L-methionine</name>
        <dbReference type="ChEBI" id="CHEBI:59789"/>
    </ligand>
</feature>
<feature type="binding site" evidence="1">
    <location>
        <position position="105"/>
    </location>
    <ligand>
        <name>S-adenosyl-L-methionine</name>
        <dbReference type="ChEBI" id="CHEBI:59789"/>
    </ligand>
</feature>
<feature type="binding site" evidence="1">
    <location>
        <position position="112"/>
    </location>
    <ligand>
        <name>S-adenosyl-L-methionine</name>
        <dbReference type="ChEBI" id="CHEBI:59789"/>
    </ligand>
</feature>
<evidence type="ECO:0000255" key="1">
    <source>
        <dbReference type="HAMAP-Rule" id="MF_01007"/>
    </source>
</evidence>
<evidence type="ECO:0000305" key="2"/>
<protein>
    <recommendedName>
        <fullName evidence="1">Ribosomal RNA small subunit methyltransferase H</fullName>
        <ecNumber evidence="1">2.1.1.199</ecNumber>
    </recommendedName>
    <alternativeName>
        <fullName evidence="1">16S rRNA m(4)C1402 methyltransferase</fullName>
    </alternativeName>
    <alternativeName>
        <fullName evidence="1">rRNA (cytosine-N(4)-)-methyltransferase RsmH</fullName>
    </alternativeName>
</protein>
<reference key="1">
    <citation type="journal article" date="2011" name="BMC Genomics">
        <title>Complete genome sequencing and analysis of a Lancefield group G Streptococcus dysgalactiae subsp. equisimilis strain causing streptococcal toxic shock syndrome (STSS).</title>
        <authorList>
            <person name="Shimomura Y."/>
            <person name="Okumura K."/>
            <person name="Murayama S.Y."/>
            <person name="Yagi J."/>
            <person name="Ubukata K."/>
            <person name="Kirikae T."/>
            <person name="Miyoshi-Akiyama T."/>
        </authorList>
    </citation>
    <scope>NUCLEOTIDE SEQUENCE [LARGE SCALE GENOMIC DNA]</scope>
    <source>
        <strain>GGS_124</strain>
    </source>
</reference>
<dbReference type="EC" id="2.1.1.199" evidence="1"/>
<dbReference type="EMBL" id="AP010935">
    <property type="protein sequence ID" value="BAH82209.1"/>
    <property type="status" value="ALT_INIT"/>
    <property type="molecule type" value="Genomic_DNA"/>
</dbReference>
<dbReference type="RefSeq" id="WP_343203101.1">
    <property type="nucleotide sequence ID" value="NC_012891.1"/>
</dbReference>
<dbReference type="SMR" id="C5WIJ4"/>
<dbReference type="KEGG" id="sds:SDEG_1726"/>
<dbReference type="HOGENOM" id="CLU_038422_2_0_9"/>
<dbReference type="GO" id="GO:0005737">
    <property type="term" value="C:cytoplasm"/>
    <property type="evidence" value="ECO:0007669"/>
    <property type="project" value="UniProtKB-SubCell"/>
</dbReference>
<dbReference type="GO" id="GO:0071424">
    <property type="term" value="F:rRNA (cytosine-N4-)-methyltransferase activity"/>
    <property type="evidence" value="ECO:0007669"/>
    <property type="project" value="UniProtKB-UniRule"/>
</dbReference>
<dbReference type="GO" id="GO:0070475">
    <property type="term" value="P:rRNA base methylation"/>
    <property type="evidence" value="ECO:0007669"/>
    <property type="project" value="UniProtKB-UniRule"/>
</dbReference>
<dbReference type="FunFam" id="1.10.150.170:FF:000001">
    <property type="entry name" value="Ribosomal RNA small subunit methyltransferase H"/>
    <property type="match status" value="1"/>
</dbReference>
<dbReference type="Gene3D" id="1.10.150.170">
    <property type="entry name" value="Putative methyltransferase TM0872, insert domain"/>
    <property type="match status" value="1"/>
</dbReference>
<dbReference type="Gene3D" id="3.40.50.150">
    <property type="entry name" value="Vaccinia Virus protein VP39"/>
    <property type="match status" value="1"/>
</dbReference>
<dbReference type="HAMAP" id="MF_01007">
    <property type="entry name" value="16SrRNA_methyltr_H"/>
    <property type="match status" value="1"/>
</dbReference>
<dbReference type="InterPro" id="IPR002903">
    <property type="entry name" value="RsmH"/>
</dbReference>
<dbReference type="InterPro" id="IPR023397">
    <property type="entry name" value="SAM-dep_MeTrfase_MraW_recog"/>
</dbReference>
<dbReference type="InterPro" id="IPR029063">
    <property type="entry name" value="SAM-dependent_MTases_sf"/>
</dbReference>
<dbReference type="NCBIfam" id="TIGR00006">
    <property type="entry name" value="16S rRNA (cytosine(1402)-N(4))-methyltransferase RsmH"/>
    <property type="match status" value="1"/>
</dbReference>
<dbReference type="PANTHER" id="PTHR11265:SF0">
    <property type="entry name" value="12S RRNA N4-METHYLCYTIDINE METHYLTRANSFERASE"/>
    <property type="match status" value="1"/>
</dbReference>
<dbReference type="PANTHER" id="PTHR11265">
    <property type="entry name" value="S-ADENOSYL-METHYLTRANSFERASE MRAW"/>
    <property type="match status" value="1"/>
</dbReference>
<dbReference type="Pfam" id="PF01795">
    <property type="entry name" value="Methyltransf_5"/>
    <property type="match status" value="1"/>
</dbReference>
<dbReference type="PIRSF" id="PIRSF004486">
    <property type="entry name" value="MraW"/>
    <property type="match status" value="1"/>
</dbReference>
<dbReference type="SUPFAM" id="SSF81799">
    <property type="entry name" value="Putative methyltransferase TM0872, insert domain"/>
    <property type="match status" value="1"/>
</dbReference>
<dbReference type="SUPFAM" id="SSF53335">
    <property type="entry name" value="S-adenosyl-L-methionine-dependent methyltransferases"/>
    <property type="match status" value="1"/>
</dbReference>
<comment type="function">
    <text evidence="1">Specifically methylates the N4 position of cytidine in position 1402 (C1402) of 16S rRNA.</text>
</comment>
<comment type="catalytic activity">
    <reaction evidence="1">
        <text>cytidine(1402) in 16S rRNA + S-adenosyl-L-methionine = N(4)-methylcytidine(1402) in 16S rRNA + S-adenosyl-L-homocysteine + H(+)</text>
        <dbReference type="Rhea" id="RHEA:42928"/>
        <dbReference type="Rhea" id="RHEA-COMP:10286"/>
        <dbReference type="Rhea" id="RHEA-COMP:10287"/>
        <dbReference type="ChEBI" id="CHEBI:15378"/>
        <dbReference type="ChEBI" id="CHEBI:57856"/>
        <dbReference type="ChEBI" id="CHEBI:59789"/>
        <dbReference type="ChEBI" id="CHEBI:74506"/>
        <dbReference type="ChEBI" id="CHEBI:82748"/>
        <dbReference type="EC" id="2.1.1.199"/>
    </reaction>
</comment>
<comment type="subcellular location">
    <subcellularLocation>
        <location evidence="1">Cytoplasm</location>
    </subcellularLocation>
</comment>
<comment type="similarity">
    <text evidence="1">Belongs to the methyltransferase superfamily. RsmH family.</text>
</comment>
<comment type="sequence caution" evidence="2">
    <conflict type="erroneous initiation">
        <sequence resource="EMBL-CDS" id="BAH82209"/>
    </conflict>
    <text>Extended N-terminus.</text>
</comment>
<name>RSMH_STRDG</name>